<proteinExistence type="evidence at protein level"/>
<accession>D4AEP3</accession>
<evidence type="ECO:0000250" key="1">
    <source>
        <dbReference type="UniProtKB" id="A1KXE4"/>
    </source>
</evidence>
<evidence type="ECO:0000255" key="2"/>
<evidence type="ECO:0000269" key="3">
    <source>
    </source>
</evidence>
<evidence type="ECO:0000269" key="4">
    <source>
    </source>
</evidence>
<evidence type="ECO:0000305" key="5"/>
<gene>
    <name type="primary">Fam168b</name>
</gene>
<comment type="function">
    <text evidence="3">Inhibitor of neuronal axonal outgrowth. Acts as a negative regulator of CDC42 and STAT3 and a positive regulator of STMN2. Positive regulator of CDC27.</text>
</comment>
<comment type="subunit">
    <text evidence="1 3">May form homodimers (By similarity). May interact with DAZAP2, FAM168A, PRDX6, RBM6, TMTC1 and YPEL2 (By similarity). Interacts with CDC27 (PubMed:20716133).</text>
</comment>
<comment type="subcellular location">
    <subcellularLocation>
        <location evidence="4">Cytoplasm</location>
        <location evidence="4">Perinuclear region</location>
    </subcellularLocation>
    <subcellularLocation>
        <location evidence="4">Cell membrane</location>
        <topology evidence="4">Multi-pass membrane protein</topology>
    </subcellularLocation>
    <subcellularLocation>
        <location evidence="4">Cell projection</location>
        <location evidence="4">Axon</location>
    </subcellularLocation>
    <text evidence="4">In cortical neurons, predominantly found at perinuclear regions. Expressed in neuronal cell bodies and axonal fibers.</text>
</comment>
<comment type="PTM">
    <text evidence="3">N-glycosylated.</text>
</comment>
<comment type="similarity">
    <text evidence="5">Belongs to the FAM168 family.</text>
</comment>
<keyword id="KW-0007">Acetylation</keyword>
<keyword id="KW-1003">Cell membrane</keyword>
<keyword id="KW-0966">Cell projection</keyword>
<keyword id="KW-0963">Cytoplasm</keyword>
<keyword id="KW-0325">Glycoprotein</keyword>
<keyword id="KW-0472">Membrane</keyword>
<keyword id="KW-0597">Phosphoprotein</keyword>
<keyword id="KW-1185">Reference proteome</keyword>
<keyword id="KW-0812">Transmembrane</keyword>
<keyword id="KW-1133">Transmembrane helix</keyword>
<feature type="chain" id="PRO_0000418109" description="Myelin-associated neurite-outgrowth inhibitor">
    <location>
        <begin position="1"/>
        <end position="194"/>
    </location>
</feature>
<feature type="topological domain" description="Cytoplasmic" evidence="2">
    <location>
        <begin position="1"/>
        <end position="18"/>
    </location>
</feature>
<feature type="transmembrane region" description="Helical" evidence="2">
    <location>
        <begin position="19"/>
        <end position="41"/>
    </location>
</feature>
<feature type="topological domain" description="Extracellular" evidence="2">
    <location>
        <begin position="42"/>
        <end position="141"/>
    </location>
</feature>
<feature type="transmembrane region" description="Helical" evidence="2">
    <location>
        <begin position="142"/>
        <end position="163"/>
    </location>
</feature>
<feature type="topological domain" description="Cytoplasmic" evidence="2">
    <location>
        <begin position="164"/>
        <end position="194"/>
    </location>
</feature>
<feature type="modified residue" description="N-acetylmethionine" evidence="1">
    <location>
        <position position="1"/>
    </location>
</feature>
<feature type="modified residue" description="Phosphoserine" evidence="1">
    <location>
        <position position="6"/>
    </location>
</feature>
<feature type="glycosylation site" description="N-linked (GlcNAc...) asparagine" evidence="2">
    <location>
        <position position="45"/>
    </location>
</feature>
<organism>
    <name type="scientific">Rattus norvegicus</name>
    <name type="common">Rat</name>
    <dbReference type="NCBI Taxonomy" id="10116"/>
    <lineage>
        <taxon>Eukaryota</taxon>
        <taxon>Metazoa</taxon>
        <taxon>Chordata</taxon>
        <taxon>Craniata</taxon>
        <taxon>Vertebrata</taxon>
        <taxon>Euteleostomi</taxon>
        <taxon>Mammalia</taxon>
        <taxon>Eutheria</taxon>
        <taxon>Euarchontoglires</taxon>
        <taxon>Glires</taxon>
        <taxon>Rodentia</taxon>
        <taxon>Myomorpha</taxon>
        <taxon>Muroidea</taxon>
        <taxon>Muridae</taxon>
        <taxon>Murinae</taxon>
        <taxon>Rattus</taxon>
    </lineage>
</organism>
<name>F168B_RAT</name>
<protein>
    <recommendedName>
        <fullName>Myelin-associated neurite-outgrowth inhibitor</fullName>
        <shortName>Mani</shortName>
    </recommendedName>
</protein>
<reference key="1">
    <citation type="submission" date="2005-09" db="EMBL/GenBank/DDBJ databases">
        <authorList>
            <person name="Mural R.J."/>
            <person name="Adams M.D."/>
            <person name="Myers E.W."/>
            <person name="Smith H.O."/>
            <person name="Venter J.C."/>
        </authorList>
    </citation>
    <scope>NUCLEOTIDE SEQUENCE [LARGE SCALE GENOMIC DNA]</scope>
</reference>
<reference key="2">
    <citation type="journal article" date="2011" name="J. Cell. Mol. Med.">
        <title>The novel protein MANI modulates neurogenesis and neurite-cone growth.</title>
        <authorList>
            <person name="Mishra M."/>
            <person name="Akatsu H."/>
            <person name="Heese K."/>
        </authorList>
    </citation>
    <scope>FUNCTION</scope>
    <scope>INTERACTION WITH CDC27</scope>
    <scope>GLYCOSYLATION</scope>
</reference>
<reference key="3">
    <citation type="journal article" date="2012" name="FEBS Lett.">
        <title>Characterizing the neurite outgrowth inhibitory effect of Mani.</title>
        <authorList>
            <person name="Mishra M."/>
            <person name="Lee S."/>
            <person name="Lin M.K."/>
            <person name="Yamashita T."/>
            <person name="Heese K."/>
        </authorList>
    </citation>
    <scope>SUBCELLULAR LOCATION</scope>
</reference>
<sequence>MNPVYSPGSSGVPYANAKGIGYPAGFPVGYAAAPAYSPNMYPGANPTFQTGYTPGTPYKVSCSPTSGAVPPYSSSPNPYQTAVYPVRSAYPQQSPYAQQGTYYTQPLYAAPPHVIHHTTVVQPNGMPATVYPAPIPPPRGSGVTMGMVAGTTMAMSAGTLLTAHSPTPVAPHPVTVPTYRAPGTPTYSYVPPQW</sequence>
<dbReference type="EMBL" id="CH473965">
    <property type="protein sequence ID" value="EDL99300.1"/>
    <property type="molecule type" value="Genomic_DNA"/>
</dbReference>
<dbReference type="RefSeq" id="NP_001258063.1">
    <property type="nucleotide sequence ID" value="NM_001271134.1"/>
</dbReference>
<dbReference type="BioGRID" id="605005">
    <property type="interactions" value="3"/>
</dbReference>
<dbReference type="FunCoup" id="D4AEP3">
    <property type="interactions" value="3224"/>
</dbReference>
<dbReference type="IntAct" id="D4AEP3">
    <property type="interactions" value="4"/>
</dbReference>
<dbReference type="MINT" id="D4AEP3"/>
<dbReference type="STRING" id="10116.ENSRNOP00000033168"/>
<dbReference type="GlyCosmos" id="D4AEP3">
    <property type="glycosylation" value="1 site, No reported glycans"/>
</dbReference>
<dbReference type="GlyGen" id="D4AEP3">
    <property type="glycosylation" value="1 site"/>
</dbReference>
<dbReference type="PhosphoSitePlus" id="D4AEP3"/>
<dbReference type="PaxDb" id="10116-ENSRNOP00000065566"/>
<dbReference type="PeptideAtlas" id="D4AEP3"/>
<dbReference type="GeneID" id="690188"/>
<dbReference type="KEGG" id="rno:690188"/>
<dbReference type="UCSC" id="RGD:1583985">
    <property type="organism name" value="rat"/>
</dbReference>
<dbReference type="AGR" id="RGD:1583985"/>
<dbReference type="CTD" id="130074"/>
<dbReference type="RGD" id="1583985">
    <property type="gene designation" value="Fam168b"/>
</dbReference>
<dbReference type="VEuPathDB" id="HostDB:ENSRNOG00000023467"/>
<dbReference type="eggNOG" id="ENOG502QQDS">
    <property type="taxonomic scope" value="Eukaryota"/>
</dbReference>
<dbReference type="HOGENOM" id="CLU_065824_1_0_1"/>
<dbReference type="InParanoid" id="D4AEP3"/>
<dbReference type="PhylomeDB" id="D4AEP3"/>
<dbReference type="TreeFam" id="TF331128"/>
<dbReference type="PRO" id="PR:D4AEP3"/>
<dbReference type="Proteomes" id="UP000002494">
    <property type="component" value="Chromosome 9"/>
</dbReference>
<dbReference type="Proteomes" id="UP000234681">
    <property type="component" value="Chromosome 9"/>
</dbReference>
<dbReference type="Bgee" id="ENSRNOG00000023467">
    <property type="expression patterns" value="Expressed in frontal cortex and 19 other cell types or tissues"/>
</dbReference>
<dbReference type="GO" id="GO:0030424">
    <property type="term" value="C:axon"/>
    <property type="evidence" value="ECO:0007669"/>
    <property type="project" value="UniProtKB-SubCell"/>
</dbReference>
<dbReference type="GO" id="GO:0016020">
    <property type="term" value="C:membrane"/>
    <property type="evidence" value="ECO:0000266"/>
    <property type="project" value="RGD"/>
</dbReference>
<dbReference type="GO" id="GO:0048471">
    <property type="term" value="C:perinuclear region of cytoplasm"/>
    <property type="evidence" value="ECO:0007669"/>
    <property type="project" value="UniProtKB-SubCell"/>
</dbReference>
<dbReference type="GO" id="GO:0005886">
    <property type="term" value="C:plasma membrane"/>
    <property type="evidence" value="ECO:0007669"/>
    <property type="project" value="UniProtKB-SubCell"/>
</dbReference>
<dbReference type="GO" id="GO:0007409">
    <property type="term" value="P:axonogenesis"/>
    <property type="evidence" value="ECO:0000266"/>
    <property type="project" value="RGD"/>
</dbReference>
<dbReference type="GO" id="GO:0010467">
    <property type="term" value="P:gene expression"/>
    <property type="evidence" value="ECO:0000266"/>
    <property type="project" value="RGD"/>
</dbReference>
<dbReference type="GO" id="GO:0022008">
    <property type="term" value="P:neurogenesis"/>
    <property type="evidence" value="ECO:0000266"/>
    <property type="project" value="RGD"/>
</dbReference>
<dbReference type="GO" id="GO:0030182">
    <property type="term" value="P:neuron differentiation"/>
    <property type="evidence" value="ECO:0000266"/>
    <property type="project" value="RGD"/>
</dbReference>
<dbReference type="InterPro" id="IPR029247">
    <property type="entry name" value="FAM168A/MANI"/>
</dbReference>
<dbReference type="PANTHER" id="PTHR31844">
    <property type="entry name" value="MYELIN-ASSOCIATED NEURITE-OUTGROWTH INHIBITOR-RELATED"/>
    <property type="match status" value="1"/>
</dbReference>
<dbReference type="Pfam" id="PF14944">
    <property type="entry name" value="TCRP1"/>
    <property type="match status" value="2"/>
</dbReference>